<keyword id="KW-0067">ATP-binding</keyword>
<keyword id="KW-0963">Cytoplasm</keyword>
<keyword id="KW-0418">Kinase</keyword>
<keyword id="KW-0460">Magnesium</keyword>
<keyword id="KW-0479">Metal-binding</keyword>
<keyword id="KW-0546">Nucleotide metabolism</keyword>
<keyword id="KW-0547">Nucleotide-binding</keyword>
<keyword id="KW-0597">Phosphoprotein</keyword>
<keyword id="KW-0808">Transferase</keyword>
<feature type="chain" id="PRO_1000026213" description="Nucleoside diphosphate kinase">
    <location>
        <begin position="1"/>
        <end position="141"/>
    </location>
</feature>
<feature type="active site" description="Pros-phosphohistidine intermediate" evidence="1">
    <location>
        <position position="117"/>
    </location>
</feature>
<feature type="binding site" evidence="1">
    <location>
        <position position="11"/>
    </location>
    <ligand>
        <name>ATP</name>
        <dbReference type="ChEBI" id="CHEBI:30616"/>
    </ligand>
</feature>
<feature type="binding site" evidence="1">
    <location>
        <position position="59"/>
    </location>
    <ligand>
        <name>ATP</name>
        <dbReference type="ChEBI" id="CHEBI:30616"/>
    </ligand>
</feature>
<feature type="binding site" evidence="1">
    <location>
        <position position="87"/>
    </location>
    <ligand>
        <name>ATP</name>
        <dbReference type="ChEBI" id="CHEBI:30616"/>
    </ligand>
</feature>
<feature type="binding site" evidence="1">
    <location>
        <position position="93"/>
    </location>
    <ligand>
        <name>ATP</name>
        <dbReference type="ChEBI" id="CHEBI:30616"/>
    </ligand>
</feature>
<feature type="binding site" evidence="1">
    <location>
        <position position="104"/>
    </location>
    <ligand>
        <name>ATP</name>
        <dbReference type="ChEBI" id="CHEBI:30616"/>
    </ligand>
</feature>
<feature type="binding site" evidence="1">
    <location>
        <position position="114"/>
    </location>
    <ligand>
        <name>ATP</name>
        <dbReference type="ChEBI" id="CHEBI:30616"/>
    </ligand>
</feature>
<comment type="function">
    <text evidence="1">Major role in the synthesis of nucleoside triphosphates other than ATP. The ATP gamma phosphate is transferred to the NDP beta phosphate via a ping-pong mechanism, using a phosphorylated active-site intermediate.</text>
</comment>
<comment type="catalytic activity">
    <reaction evidence="1">
        <text>a 2'-deoxyribonucleoside 5'-diphosphate + ATP = a 2'-deoxyribonucleoside 5'-triphosphate + ADP</text>
        <dbReference type="Rhea" id="RHEA:44640"/>
        <dbReference type="ChEBI" id="CHEBI:30616"/>
        <dbReference type="ChEBI" id="CHEBI:61560"/>
        <dbReference type="ChEBI" id="CHEBI:73316"/>
        <dbReference type="ChEBI" id="CHEBI:456216"/>
        <dbReference type="EC" id="2.7.4.6"/>
    </reaction>
</comment>
<comment type="catalytic activity">
    <reaction evidence="1">
        <text>a ribonucleoside 5'-diphosphate + ATP = a ribonucleoside 5'-triphosphate + ADP</text>
        <dbReference type="Rhea" id="RHEA:18113"/>
        <dbReference type="ChEBI" id="CHEBI:30616"/>
        <dbReference type="ChEBI" id="CHEBI:57930"/>
        <dbReference type="ChEBI" id="CHEBI:61557"/>
        <dbReference type="ChEBI" id="CHEBI:456216"/>
        <dbReference type="EC" id="2.7.4.6"/>
    </reaction>
</comment>
<comment type="cofactor">
    <cofactor evidence="1">
        <name>Mg(2+)</name>
        <dbReference type="ChEBI" id="CHEBI:18420"/>
    </cofactor>
</comment>
<comment type="subunit">
    <text evidence="1">Homotetramer.</text>
</comment>
<comment type="subcellular location">
    <subcellularLocation>
        <location evidence="1">Cytoplasm</location>
    </subcellularLocation>
</comment>
<comment type="similarity">
    <text evidence="1">Belongs to the NDK family.</text>
</comment>
<protein>
    <recommendedName>
        <fullName evidence="1">Nucleoside diphosphate kinase</fullName>
        <shortName evidence="1">NDK</shortName>
        <shortName evidence="1">NDP kinase</shortName>
        <ecNumber evidence="1">2.7.4.6</ecNumber>
    </recommendedName>
    <alternativeName>
        <fullName evidence="1">Nucleoside-2-P kinase</fullName>
    </alternativeName>
</protein>
<evidence type="ECO:0000255" key="1">
    <source>
        <dbReference type="HAMAP-Rule" id="MF_00451"/>
    </source>
</evidence>
<dbReference type="EC" id="2.7.4.6" evidence="1"/>
<dbReference type="EMBL" id="CP000440">
    <property type="protein sequence ID" value="ABI87309.1"/>
    <property type="molecule type" value="Genomic_DNA"/>
</dbReference>
<dbReference type="RefSeq" id="WP_006755775.1">
    <property type="nucleotide sequence ID" value="NZ_CP009798.1"/>
</dbReference>
<dbReference type="SMR" id="Q0BEW4"/>
<dbReference type="GeneID" id="93086040"/>
<dbReference type="KEGG" id="bam:Bamb_1753"/>
<dbReference type="PATRIC" id="fig|339670.21.peg.3207"/>
<dbReference type="eggNOG" id="COG0105">
    <property type="taxonomic scope" value="Bacteria"/>
</dbReference>
<dbReference type="Proteomes" id="UP000000662">
    <property type="component" value="Chromosome 1"/>
</dbReference>
<dbReference type="GO" id="GO:0005737">
    <property type="term" value="C:cytoplasm"/>
    <property type="evidence" value="ECO:0007669"/>
    <property type="project" value="UniProtKB-SubCell"/>
</dbReference>
<dbReference type="GO" id="GO:0005524">
    <property type="term" value="F:ATP binding"/>
    <property type="evidence" value="ECO:0007669"/>
    <property type="project" value="UniProtKB-UniRule"/>
</dbReference>
<dbReference type="GO" id="GO:0046872">
    <property type="term" value="F:metal ion binding"/>
    <property type="evidence" value="ECO:0007669"/>
    <property type="project" value="UniProtKB-KW"/>
</dbReference>
<dbReference type="GO" id="GO:0004550">
    <property type="term" value="F:nucleoside diphosphate kinase activity"/>
    <property type="evidence" value="ECO:0007669"/>
    <property type="project" value="UniProtKB-UniRule"/>
</dbReference>
<dbReference type="GO" id="GO:0006241">
    <property type="term" value="P:CTP biosynthetic process"/>
    <property type="evidence" value="ECO:0007669"/>
    <property type="project" value="UniProtKB-UniRule"/>
</dbReference>
<dbReference type="GO" id="GO:0006183">
    <property type="term" value="P:GTP biosynthetic process"/>
    <property type="evidence" value="ECO:0007669"/>
    <property type="project" value="UniProtKB-UniRule"/>
</dbReference>
<dbReference type="GO" id="GO:0006228">
    <property type="term" value="P:UTP biosynthetic process"/>
    <property type="evidence" value="ECO:0007669"/>
    <property type="project" value="UniProtKB-UniRule"/>
</dbReference>
<dbReference type="CDD" id="cd04413">
    <property type="entry name" value="NDPk_I"/>
    <property type="match status" value="1"/>
</dbReference>
<dbReference type="FunFam" id="3.30.70.141:FF:000001">
    <property type="entry name" value="Nucleoside diphosphate kinase"/>
    <property type="match status" value="1"/>
</dbReference>
<dbReference type="Gene3D" id="3.30.70.141">
    <property type="entry name" value="Nucleoside diphosphate kinase-like domain"/>
    <property type="match status" value="1"/>
</dbReference>
<dbReference type="HAMAP" id="MF_00451">
    <property type="entry name" value="NDP_kinase"/>
    <property type="match status" value="1"/>
</dbReference>
<dbReference type="InterPro" id="IPR034907">
    <property type="entry name" value="NDK-like_dom"/>
</dbReference>
<dbReference type="InterPro" id="IPR036850">
    <property type="entry name" value="NDK-like_dom_sf"/>
</dbReference>
<dbReference type="InterPro" id="IPR001564">
    <property type="entry name" value="Nucleoside_diP_kinase"/>
</dbReference>
<dbReference type="NCBIfam" id="NF001908">
    <property type="entry name" value="PRK00668.1"/>
    <property type="match status" value="1"/>
</dbReference>
<dbReference type="PANTHER" id="PTHR46161">
    <property type="entry name" value="NUCLEOSIDE DIPHOSPHATE KINASE"/>
    <property type="match status" value="1"/>
</dbReference>
<dbReference type="PANTHER" id="PTHR46161:SF3">
    <property type="entry name" value="NUCLEOSIDE DIPHOSPHATE KINASE DDB_G0292928-RELATED"/>
    <property type="match status" value="1"/>
</dbReference>
<dbReference type="Pfam" id="PF00334">
    <property type="entry name" value="NDK"/>
    <property type="match status" value="1"/>
</dbReference>
<dbReference type="PRINTS" id="PR01243">
    <property type="entry name" value="NUCDPKINASE"/>
</dbReference>
<dbReference type="SMART" id="SM00562">
    <property type="entry name" value="NDK"/>
    <property type="match status" value="1"/>
</dbReference>
<dbReference type="SUPFAM" id="SSF54919">
    <property type="entry name" value="Nucleoside diphosphate kinase, NDK"/>
    <property type="match status" value="1"/>
</dbReference>
<dbReference type="PROSITE" id="PS51374">
    <property type="entry name" value="NDPK_LIKE"/>
    <property type="match status" value="1"/>
</dbReference>
<reference key="1">
    <citation type="submission" date="2006-08" db="EMBL/GenBank/DDBJ databases">
        <title>Complete sequence of chromosome 1 of Burkholderia cepacia AMMD.</title>
        <authorList>
            <person name="Copeland A."/>
            <person name="Lucas S."/>
            <person name="Lapidus A."/>
            <person name="Barry K."/>
            <person name="Detter J.C."/>
            <person name="Glavina del Rio T."/>
            <person name="Hammon N."/>
            <person name="Israni S."/>
            <person name="Pitluck S."/>
            <person name="Bruce D."/>
            <person name="Chain P."/>
            <person name="Malfatti S."/>
            <person name="Shin M."/>
            <person name="Vergez L."/>
            <person name="Schmutz J."/>
            <person name="Larimer F."/>
            <person name="Land M."/>
            <person name="Hauser L."/>
            <person name="Kyrpides N."/>
            <person name="Kim E."/>
            <person name="Parke J."/>
            <person name="Coenye T."/>
            <person name="Konstantinidis K."/>
            <person name="Ramette A."/>
            <person name="Tiedje J."/>
            <person name="Richardson P."/>
        </authorList>
    </citation>
    <scope>NUCLEOTIDE SEQUENCE [LARGE SCALE GENOMIC DNA]</scope>
    <source>
        <strain>ATCC BAA-244 / DSM 16087 / CCUG 44356 / LMG 19182 / AMMD</strain>
    </source>
</reference>
<gene>
    <name evidence="1" type="primary">ndk</name>
    <name type="ordered locus">Bamb_1753</name>
</gene>
<proteinExistence type="inferred from homology"/>
<organism>
    <name type="scientific">Burkholderia ambifaria (strain ATCC BAA-244 / DSM 16087 / CCUG 44356 / LMG 19182 / AMMD)</name>
    <name type="common">Burkholderia cepacia (strain AMMD)</name>
    <dbReference type="NCBI Taxonomy" id="339670"/>
    <lineage>
        <taxon>Bacteria</taxon>
        <taxon>Pseudomonadati</taxon>
        <taxon>Pseudomonadota</taxon>
        <taxon>Betaproteobacteria</taxon>
        <taxon>Burkholderiales</taxon>
        <taxon>Burkholderiaceae</taxon>
        <taxon>Burkholderia</taxon>
        <taxon>Burkholderia cepacia complex</taxon>
    </lineage>
</organism>
<sequence>MAIERTLSIIKPDAVAKNVIGQIYSRFEGAGLKIVASRMAHLSRGDAEKFYAVHAARPFFKDLVDFMISGPVMIQVLEGEGAILKNRDLMGATDPKKAEKGTIRADFADSIDANAVHGSDAAETAAVEIAFFFPEMNVYSR</sequence>
<accession>Q0BEW4</accession>
<name>NDK_BURCM</name>